<gene>
    <name evidence="2" type="primary">get1</name>
    <name evidence="2" type="synonym">wrb</name>
</gene>
<reference key="1">
    <citation type="journal article" date="2004" name="Proc. Natl. Acad. Sci. U.S.A.">
        <title>Identification of 315 genes essential for early zebrafish development.</title>
        <authorList>
            <person name="Amsterdam A."/>
            <person name="Nissen R.M."/>
            <person name="Sun Z."/>
            <person name="Swindell E.C."/>
            <person name="Farrington S."/>
            <person name="Hopkins N."/>
        </authorList>
    </citation>
    <scope>NUCLEOTIDE SEQUENCE [LARGE SCALE MRNA]</scope>
</reference>
<reference key="2">
    <citation type="submission" date="2007-07" db="EMBL/GenBank/DDBJ databases">
        <authorList>
            <consortium name="NIH - Zebrafish Gene Collection (ZGC) project"/>
        </authorList>
    </citation>
    <scope>NUCLEOTIDE SEQUENCE [LARGE SCALE MRNA]</scope>
    <source>
        <tissue>Eye</tissue>
    </source>
</reference>
<protein>
    <recommendedName>
        <fullName evidence="2">Guided entry of tail-anchored proteins factor 1</fullName>
    </recommendedName>
    <alternativeName>
        <fullName>Tail-anchored protein insertion receptor WRB</fullName>
    </alternativeName>
    <alternativeName>
        <fullName>Tryptophan-rich basic protein</fullName>
    </alternativeName>
</protein>
<proteinExistence type="evidence at transcript level"/>
<organism>
    <name type="scientific">Danio rerio</name>
    <name type="common">Zebrafish</name>
    <name type="synonym">Brachydanio rerio</name>
    <dbReference type="NCBI Taxonomy" id="7955"/>
    <lineage>
        <taxon>Eukaryota</taxon>
        <taxon>Metazoa</taxon>
        <taxon>Chordata</taxon>
        <taxon>Craniata</taxon>
        <taxon>Vertebrata</taxon>
        <taxon>Euteleostomi</taxon>
        <taxon>Actinopterygii</taxon>
        <taxon>Neopterygii</taxon>
        <taxon>Teleostei</taxon>
        <taxon>Ostariophysi</taxon>
        <taxon>Cypriniformes</taxon>
        <taxon>Danionidae</taxon>
        <taxon>Danioninae</taxon>
        <taxon>Danio</taxon>
    </lineage>
</organism>
<comment type="function">
    <text evidence="2">Required for the post-translational delivery of tail-anchored (TA) proteins to the endoplasmic reticulum (ER) (By similarity). Together with CAMLG/GET2, acts as a membrane receptor for soluble GET3/TRC40, which recognizes and selectively binds the transmembrane domain of TA proteins in the cytosol (By similarity). Required to ensure correct topology and ER insertion of CAMLG (By similarity).</text>
</comment>
<comment type="subunit">
    <text evidence="2">Component of the Golgi to ER traffic (GET) complex, which is composed of GET1/WRB, CAMLG/GET2 and GET3/TRC40. Within the complex, GET1 and CAMLG form a heterotetramer which is stabilized by phosphatidylinositol binding and which binds to the GET3 homodimer.</text>
</comment>
<comment type="subcellular location">
    <subcellularLocation>
        <location evidence="2">Endoplasmic reticulum membrane</location>
        <topology evidence="3">Multi-pass membrane protein</topology>
    </subcellularLocation>
</comment>
<comment type="similarity">
    <text evidence="4">Belongs to the WRB/GET1 family.</text>
</comment>
<accession>Q6DRM0</accession>
<keyword id="KW-0175">Coiled coil</keyword>
<keyword id="KW-0256">Endoplasmic reticulum</keyword>
<keyword id="KW-0472">Membrane</keyword>
<keyword id="KW-1185">Reference proteome</keyword>
<keyword id="KW-0812">Transmembrane</keyword>
<keyword id="KW-1133">Transmembrane helix</keyword>
<dbReference type="EMBL" id="BC150353">
    <property type="protein sequence ID" value="AAI50354.1"/>
    <property type="molecule type" value="mRNA"/>
</dbReference>
<dbReference type="EMBL" id="AY648739">
    <property type="protein sequence ID" value="AAT68057.1"/>
    <property type="molecule type" value="mRNA"/>
</dbReference>
<dbReference type="RefSeq" id="NP_001003413.1">
    <property type="nucleotide sequence ID" value="NM_001003413.1"/>
</dbReference>
<dbReference type="SMR" id="Q6DRM0"/>
<dbReference type="FunCoup" id="Q6DRM0">
    <property type="interactions" value="932"/>
</dbReference>
<dbReference type="STRING" id="7955.ENSDARP00000100769"/>
<dbReference type="PaxDb" id="7955-ENSDARP00000100769"/>
<dbReference type="Ensembl" id="ENSDART00000114134">
    <property type="protein sequence ID" value="ENSDARP00000100769"/>
    <property type="gene ID" value="ENSDARG00000074271"/>
</dbReference>
<dbReference type="GeneID" id="335756"/>
<dbReference type="KEGG" id="dre:335756"/>
<dbReference type="AGR" id="ZFIN:ZDB-GENE-030131-7696"/>
<dbReference type="CTD" id="7485"/>
<dbReference type="ZFIN" id="ZDB-GENE-030131-7696">
    <property type="gene designation" value="get1"/>
</dbReference>
<dbReference type="eggNOG" id="KOG4253">
    <property type="taxonomic scope" value="Eukaryota"/>
</dbReference>
<dbReference type="HOGENOM" id="CLU_121992_0_0_1"/>
<dbReference type="InParanoid" id="Q6DRM0"/>
<dbReference type="OMA" id="AEWIISF"/>
<dbReference type="OrthoDB" id="69461at2759"/>
<dbReference type="PhylomeDB" id="Q6DRM0"/>
<dbReference type="TreeFam" id="TF314708"/>
<dbReference type="PRO" id="PR:Q6DRM0"/>
<dbReference type="Proteomes" id="UP000000437">
    <property type="component" value="Alternate scaffold 15"/>
</dbReference>
<dbReference type="Proteomes" id="UP000000437">
    <property type="component" value="Chromosome 15"/>
</dbReference>
<dbReference type="Bgee" id="ENSDARG00000074271">
    <property type="expression patterns" value="Expressed in testis and 28 other cell types or tissues"/>
</dbReference>
<dbReference type="GO" id="GO:0005783">
    <property type="term" value="C:endoplasmic reticulum"/>
    <property type="evidence" value="ECO:0000314"/>
    <property type="project" value="MGI"/>
</dbReference>
<dbReference type="GO" id="GO:0005789">
    <property type="term" value="C:endoplasmic reticulum membrane"/>
    <property type="evidence" value="ECO:0007669"/>
    <property type="project" value="UniProtKB-SubCell"/>
</dbReference>
<dbReference type="GO" id="GO:0043529">
    <property type="term" value="C:GET complex"/>
    <property type="evidence" value="ECO:0000318"/>
    <property type="project" value="GO_Central"/>
</dbReference>
<dbReference type="GO" id="GO:0043495">
    <property type="term" value="F:protein-membrane adaptor activity"/>
    <property type="evidence" value="ECO:0000318"/>
    <property type="project" value="GO_Central"/>
</dbReference>
<dbReference type="GO" id="GO:0007507">
    <property type="term" value="P:heart development"/>
    <property type="evidence" value="ECO:0000315"/>
    <property type="project" value="ZFIN"/>
</dbReference>
<dbReference type="GO" id="GO:0010996">
    <property type="term" value="P:response to auditory stimulus"/>
    <property type="evidence" value="ECO:0000315"/>
    <property type="project" value="ZFIN"/>
</dbReference>
<dbReference type="GO" id="GO:0060041">
    <property type="term" value="P:retina development in camera-type eye"/>
    <property type="evidence" value="ECO:0000315"/>
    <property type="project" value="ZFIN"/>
</dbReference>
<dbReference type="GO" id="GO:0007605">
    <property type="term" value="P:sensory perception of sound"/>
    <property type="evidence" value="ECO:0000314"/>
    <property type="project" value="MGI"/>
</dbReference>
<dbReference type="GO" id="GO:0001964">
    <property type="term" value="P:startle response"/>
    <property type="evidence" value="ECO:0000315"/>
    <property type="project" value="MGI"/>
</dbReference>
<dbReference type="GO" id="GO:0071816">
    <property type="term" value="P:tail-anchored membrane protein insertion into ER membrane"/>
    <property type="evidence" value="ECO:0000315"/>
    <property type="project" value="ZFIN"/>
</dbReference>
<dbReference type="Gene3D" id="1.10.287.660">
    <property type="entry name" value="Helix hairpin bin"/>
    <property type="match status" value="1"/>
</dbReference>
<dbReference type="InterPro" id="IPR028945">
    <property type="entry name" value="Get1"/>
</dbReference>
<dbReference type="InterPro" id="IPR029012">
    <property type="entry name" value="Helix_hairpin_bin_sf"/>
</dbReference>
<dbReference type="PANTHER" id="PTHR42650:SF1">
    <property type="entry name" value="GUIDED ENTRY OF TAIL-ANCHORED PROTEINS FACTOR 1"/>
    <property type="match status" value="1"/>
</dbReference>
<dbReference type="PANTHER" id="PTHR42650">
    <property type="entry name" value="TAIL-ANCHORED PROTEIN INSERTION RECEPTOR WRB"/>
    <property type="match status" value="1"/>
</dbReference>
<dbReference type="Pfam" id="PF04420">
    <property type="entry name" value="CHD5"/>
    <property type="match status" value="1"/>
</dbReference>
<feature type="chain" id="PRO_0000360887" description="Guided entry of tail-anchored proteins factor 1">
    <location>
        <begin position="1"/>
        <end position="170"/>
    </location>
</feature>
<feature type="topological domain" description="Lumenal" evidence="3">
    <location>
        <begin position="1"/>
        <end position="6"/>
    </location>
</feature>
<feature type="transmembrane region" description="Helical" evidence="3">
    <location>
        <begin position="7"/>
        <end position="27"/>
    </location>
</feature>
<feature type="topological domain" description="Cytoplasmic" evidence="3">
    <location>
        <begin position="28"/>
        <end position="96"/>
    </location>
</feature>
<feature type="transmembrane region" description="Helical" evidence="3">
    <location>
        <begin position="97"/>
        <end position="117"/>
    </location>
</feature>
<feature type="topological domain" description="Lumenal" evidence="3">
    <location>
        <begin position="118"/>
        <end position="137"/>
    </location>
</feature>
<feature type="transmembrane region" description="Helical" evidence="3">
    <location>
        <begin position="138"/>
        <end position="158"/>
    </location>
</feature>
<feature type="topological domain" description="Cytoplasmic" evidence="3">
    <location>
        <begin position="159"/>
        <end position="170"/>
    </location>
</feature>
<feature type="region of interest" description="Interaction with GET3/TRC40" evidence="1">
    <location>
        <begin position="35"/>
        <end position="93"/>
    </location>
</feature>
<feature type="coiled-coil region" evidence="3">
    <location>
        <begin position="61"/>
        <end position="91"/>
    </location>
</feature>
<evidence type="ECO:0000250" key="1"/>
<evidence type="ECO:0000250" key="2">
    <source>
        <dbReference type="UniProtKB" id="O00258"/>
    </source>
</evidence>
<evidence type="ECO:0000255" key="3"/>
<evidence type="ECO:0000305" key="4"/>
<name>GET1_DANRE</name>
<sequence>MAAGFNWFLVLSSVFLCNLVKTFLPSISSFLSKIFHKDADQEMEMRTEIQNMKMELSTISMMDEFARYARLERKINKMTDQLKTLVKSRTAQQAKMKWIVNIAFYILQAALMISLILKYYADPVTVVPSKWIAPLERLVAFPSGVAGGVGITCWLVVCNKVVALILQAVS</sequence>